<protein>
    <recommendedName>
        <fullName>Phosphatidylinositol N-acetylglucosaminyltransferase subunit gpi15</fullName>
        <ecNumber>2.4.1.198</ecNumber>
    </recommendedName>
    <alternativeName>
        <fullName>PIGH homolog</fullName>
    </alternativeName>
</protein>
<keyword id="KW-0256">Endoplasmic reticulum</keyword>
<keyword id="KW-0328">Glycosyltransferase</keyword>
<keyword id="KW-0337">GPI-anchor biosynthesis</keyword>
<keyword id="KW-0472">Membrane</keyword>
<keyword id="KW-1185">Reference proteome</keyword>
<keyword id="KW-0808">Transferase</keyword>
<keyword id="KW-0812">Transmembrane</keyword>
<keyword id="KW-1133">Transmembrane helix</keyword>
<sequence length="160" mass="18036">MLTIKRYPGAIEFTVHTSKSYGTQMFALCFISFVIGATSLAIGRSPKIIITLVELSFLLSLFHIISGVNHESLFVIRDLGVQTNCHSIVPWKSSSKLIPLDSIRDIFINEGFRKFDVCYYMGIAIESETEIHVVFPTLLPRHDVLQKVYKETVILLANNS</sequence>
<reference key="1">
    <citation type="journal article" date="2002" name="Nature">
        <title>The genome sequence of Schizosaccharomyces pombe.</title>
        <authorList>
            <person name="Wood V."/>
            <person name="Gwilliam R."/>
            <person name="Rajandream M.A."/>
            <person name="Lyne M.H."/>
            <person name="Lyne R."/>
            <person name="Stewart A."/>
            <person name="Sgouros J.G."/>
            <person name="Peat N."/>
            <person name="Hayles J."/>
            <person name="Baker S.G."/>
            <person name="Basham D."/>
            <person name="Bowman S."/>
            <person name="Brooks K."/>
            <person name="Brown D."/>
            <person name="Brown S."/>
            <person name="Chillingworth T."/>
            <person name="Churcher C.M."/>
            <person name="Collins M."/>
            <person name="Connor R."/>
            <person name="Cronin A."/>
            <person name="Davis P."/>
            <person name="Feltwell T."/>
            <person name="Fraser A."/>
            <person name="Gentles S."/>
            <person name="Goble A."/>
            <person name="Hamlin N."/>
            <person name="Harris D.E."/>
            <person name="Hidalgo J."/>
            <person name="Hodgson G."/>
            <person name="Holroyd S."/>
            <person name="Hornsby T."/>
            <person name="Howarth S."/>
            <person name="Huckle E.J."/>
            <person name="Hunt S."/>
            <person name="Jagels K."/>
            <person name="James K.D."/>
            <person name="Jones L."/>
            <person name="Jones M."/>
            <person name="Leather S."/>
            <person name="McDonald S."/>
            <person name="McLean J."/>
            <person name="Mooney P."/>
            <person name="Moule S."/>
            <person name="Mungall K.L."/>
            <person name="Murphy L.D."/>
            <person name="Niblett D."/>
            <person name="Odell C."/>
            <person name="Oliver K."/>
            <person name="O'Neil S."/>
            <person name="Pearson D."/>
            <person name="Quail M.A."/>
            <person name="Rabbinowitsch E."/>
            <person name="Rutherford K.M."/>
            <person name="Rutter S."/>
            <person name="Saunders D."/>
            <person name="Seeger K."/>
            <person name="Sharp S."/>
            <person name="Skelton J."/>
            <person name="Simmonds M.N."/>
            <person name="Squares R."/>
            <person name="Squares S."/>
            <person name="Stevens K."/>
            <person name="Taylor K."/>
            <person name="Taylor R.G."/>
            <person name="Tivey A."/>
            <person name="Walsh S.V."/>
            <person name="Warren T."/>
            <person name="Whitehead S."/>
            <person name="Woodward J.R."/>
            <person name="Volckaert G."/>
            <person name="Aert R."/>
            <person name="Robben J."/>
            <person name="Grymonprez B."/>
            <person name="Weltjens I."/>
            <person name="Vanstreels E."/>
            <person name="Rieger M."/>
            <person name="Schaefer M."/>
            <person name="Mueller-Auer S."/>
            <person name="Gabel C."/>
            <person name="Fuchs M."/>
            <person name="Duesterhoeft A."/>
            <person name="Fritzc C."/>
            <person name="Holzer E."/>
            <person name="Moestl D."/>
            <person name="Hilbert H."/>
            <person name="Borzym K."/>
            <person name="Langer I."/>
            <person name="Beck A."/>
            <person name="Lehrach H."/>
            <person name="Reinhardt R."/>
            <person name="Pohl T.M."/>
            <person name="Eger P."/>
            <person name="Zimmermann W."/>
            <person name="Wedler H."/>
            <person name="Wambutt R."/>
            <person name="Purnelle B."/>
            <person name="Goffeau A."/>
            <person name="Cadieu E."/>
            <person name="Dreano S."/>
            <person name="Gloux S."/>
            <person name="Lelaure V."/>
            <person name="Mottier S."/>
            <person name="Galibert F."/>
            <person name="Aves S.J."/>
            <person name="Xiang Z."/>
            <person name="Hunt C."/>
            <person name="Moore K."/>
            <person name="Hurst S.M."/>
            <person name="Lucas M."/>
            <person name="Rochet M."/>
            <person name="Gaillardin C."/>
            <person name="Tallada V.A."/>
            <person name="Garzon A."/>
            <person name="Thode G."/>
            <person name="Daga R.R."/>
            <person name="Cruzado L."/>
            <person name="Jimenez J."/>
            <person name="Sanchez M."/>
            <person name="del Rey F."/>
            <person name="Benito J."/>
            <person name="Dominguez A."/>
            <person name="Revuelta J.L."/>
            <person name="Moreno S."/>
            <person name="Armstrong J."/>
            <person name="Forsburg S.L."/>
            <person name="Cerutti L."/>
            <person name="Lowe T."/>
            <person name="McCombie W.R."/>
            <person name="Paulsen I."/>
            <person name="Potashkin J."/>
            <person name="Shpakovski G.V."/>
            <person name="Ussery D."/>
            <person name="Barrell B.G."/>
            <person name="Nurse P."/>
        </authorList>
    </citation>
    <scope>NUCLEOTIDE SEQUENCE [LARGE SCALE GENOMIC DNA]</scope>
    <source>
        <strain>972 / ATCC 24843</strain>
    </source>
</reference>
<reference key="2">
    <citation type="journal article" date="2006" name="Nat. Biotechnol.">
        <title>ORFeome cloning and global analysis of protein localization in the fission yeast Schizosaccharomyces pombe.</title>
        <authorList>
            <person name="Matsuyama A."/>
            <person name="Arai R."/>
            <person name="Yashiroda Y."/>
            <person name="Shirai A."/>
            <person name="Kamata A."/>
            <person name="Sekido S."/>
            <person name="Kobayashi Y."/>
            <person name="Hashimoto A."/>
            <person name="Hamamoto M."/>
            <person name="Hiraoka Y."/>
            <person name="Horinouchi S."/>
            <person name="Yoshida M."/>
        </authorList>
    </citation>
    <scope>SUBCELLULAR LOCATION [LARGE SCALE ANALYSIS]</scope>
</reference>
<evidence type="ECO:0000250" key="1"/>
<evidence type="ECO:0000255" key="2"/>
<evidence type="ECO:0000305" key="3"/>
<dbReference type="EC" id="2.4.1.198"/>
<dbReference type="EMBL" id="CU329671">
    <property type="protein sequence ID" value="CAB39362.1"/>
    <property type="molecule type" value="Genomic_DNA"/>
</dbReference>
<dbReference type="PIR" id="T40636">
    <property type="entry name" value="T40636"/>
</dbReference>
<dbReference type="RefSeq" id="NP_596139.1">
    <property type="nucleotide sequence ID" value="NM_001022057.2"/>
</dbReference>
<dbReference type="ComplexPortal" id="CPX-10121">
    <property type="entry name" value="Glycosylphosphatidylinositol-N-acetylglucosaminyltransferase complex"/>
</dbReference>
<dbReference type="FunCoup" id="Q9Y7L7">
    <property type="interactions" value="86"/>
</dbReference>
<dbReference type="STRING" id="284812.Q9Y7L7"/>
<dbReference type="PaxDb" id="4896-SPBC685.05.1"/>
<dbReference type="EnsemblFungi" id="SPBC685.05.1">
    <property type="protein sequence ID" value="SPBC685.05.1:pep"/>
    <property type="gene ID" value="SPBC685.05"/>
</dbReference>
<dbReference type="GeneID" id="2540532"/>
<dbReference type="KEGG" id="spo:2540532"/>
<dbReference type="PomBase" id="SPBC685.05">
    <property type="gene designation" value="gpi15"/>
</dbReference>
<dbReference type="VEuPathDB" id="FungiDB:SPBC685.05"/>
<dbReference type="eggNOG" id="KOG4551">
    <property type="taxonomic scope" value="Eukaryota"/>
</dbReference>
<dbReference type="HOGENOM" id="CLU_1653146_0_0_1"/>
<dbReference type="InParanoid" id="Q9Y7L7"/>
<dbReference type="OMA" id="NCHSIVP"/>
<dbReference type="PhylomeDB" id="Q9Y7L7"/>
<dbReference type="UniPathway" id="UPA00196"/>
<dbReference type="PRO" id="PR:Q9Y7L7"/>
<dbReference type="Proteomes" id="UP000002485">
    <property type="component" value="Chromosome II"/>
</dbReference>
<dbReference type="GO" id="GO:0005783">
    <property type="term" value="C:endoplasmic reticulum"/>
    <property type="evidence" value="ECO:0007005"/>
    <property type="project" value="PomBase"/>
</dbReference>
<dbReference type="GO" id="GO:0000506">
    <property type="term" value="C:glycosylphosphatidylinositol-N-acetylglucosaminyltransferase (GPI-GnT) complex"/>
    <property type="evidence" value="ECO:0000318"/>
    <property type="project" value="GO_Central"/>
</dbReference>
<dbReference type="GO" id="GO:0017176">
    <property type="term" value="F:phosphatidylinositol N-acetylglucosaminyltransferase activity"/>
    <property type="evidence" value="ECO:0007669"/>
    <property type="project" value="UniProtKB-EC"/>
</dbReference>
<dbReference type="GO" id="GO:0006506">
    <property type="term" value="P:GPI anchor biosynthetic process"/>
    <property type="evidence" value="ECO:0000318"/>
    <property type="project" value="GO_Central"/>
</dbReference>
<dbReference type="InterPro" id="IPR019328">
    <property type="entry name" value="GPI-GlcNAc_Trfase_PIG-H_dom"/>
</dbReference>
<dbReference type="InterPro" id="IPR044215">
    <property type="entry name" value="PIG-H"/>
</dbReference>
<dbReference type="PANTHER" id="PTHR15231">
    <property type="entry name" value="PHOSPHATIDYLINOSITOL N-ACETYLGLUCOSAMINYLTRANSFERASE SUBUNIT H"/>
    <property type="match status" value="1"/>
</dbReference>
<dbReference type="PANTHER" id="PTHR15231:SF1">
    <property type="entry name" value="PHOSPHATIDYLINOSITOL N-ACETYLGLUCOSAMINYLTRANSFERASE SUBUNIT H"/>
    <property type="match status" value="1"/>
</dbReference>
<dbReference type="Pfam" id="PF10181">
    <property type="entry name" value="PIG-H"/>
    <property type="match status" value="1"/>
</dbReference>
<organism>
    <name type="scientific">Schizosaccharomyces pombe (strain 972 / ATCC 24843)</name>
    <name type="common">Fission yeast</name>
    <dbReference type="NCBI Taxonomy" id="284812"/>
    <lineage>
        <taxon>Eukaryota</taxon>
        <taxon>Fungi</taxon>
        <taxon>Dikarya</taxon>
        <taxon>Ascomycota</taxon>
        <taxon>Taphrinomycotina</taxon>
        <taxon>Schizosaccharomycetes</taxon>
        <taxon>Schizosaccharomycetales</taxon>
        <taxon>Schizosaccharomycetaceae</taxon>
        <taxon>Schizosaccharomyces</taxon>
    </lineage>
</organism>
<accession>Q9Y7L7</accession>
<proteinExistence type="inferred from homology"/>
<feature type="chain" id="PRO_0000351441" description="Phosphatidylinositol N-acetylglucosaminyltransferase subunit gpi15">
    <location>
        <begin position="1"/>
        <end position="160"/>
    </location>
</feature>
<feature type="transmembrane region" description="Helical" evidence="2">
    <location>
        <begin position="22"/>
        <end position="42"/>
    </location>
</feature>
<feature type="transmembrane region" description="Helical" evidence="2">
    <location>
        <begin position="48"/>
        <end position="68"/>
    </location>
</feature>
<name>GPI15_SCHPO</name>
<gene>
    <name type="primary">gpi15</name>
    <name type="ORF">SPBC685.05</name>
</gene>
<comment type="function">
    <text evidence="1">Part of the complex catalyzing the transfer of N-acetylglucosamine from UDP-N-acetylglucosamine to phosphatidylinositol, the first step of GPI biosynthesis.</text>
</comment>
<comment type="catalytic activity">
    <reaction>
        <text>a 1,2-diacyl-sn-glycero-3-phospho-(1D-myo-inositol) + UDP-N-acetyl-alpha-D-glucosamine = a 6-(N-acetyl-alpha-D-glucosaminyl)-1-(1,2-diacyl-sn-glycero-3-phospho)-1D-myo-inositol + UDP + H(+)</text>
        <dbReference type="Rhea" id="RHEA:14789"/>
        <dbReference type="ChEBI" id="CHEBI:15378"/>
        <dbReference type="ChEBI" id="CHEBI:57265"/>
        <dbReference type="ChEBI" id="CHEBI:57705"/>
        <dbReference type="ChEBI" id="CHEBI:57880"/>
        <dbReference type="ChEBI" id="CHEBI:58223"/>
        <dbReference type="EC" id="2.4.1.198"/>
    </reaction>
</comment>
<comment type="pathway">
    <text>Glycolipid biosynthesis; glycosylphosphatidylinositol-anchor biosynthesis.</text>
</comment>
<comment type="subcellular location">
    <subcellularLocation>
        <location evidence="3">Endoplasmic reticulum membrane</location>
        <topology evidence="3">Multi-pass membrane protein</topology>
    </subcellularLocation>
</comment>
<comment type="similarity">
    <text evidence="3">Belongs to the PIGH family.</text>
</comment>